<name>YIHI_ENT38</name>
<dbReference type="EMBL" id="CP000653">
    <property type="protein sequence ID" value="ABP62754.1"/>
    <property type="molecule type" value="Genomic_DNA"/>
</dbReference>
<dbReference type="RefSeq" id="WP_015961058.1">
    <property type="nucleotide sequence ID" value="NC_009436.1"/>
</dbReference>
<dbReference type="SMR" id="A4WGC4"/>
<dbReference type="STRING" id="399742.Ent638_4100"/>
<dbReference type="KEGG" id="ent:Ent638_4100"/>
<dbReference type="eggNOG" id="COG3078">
    <property type="taxonomic scope" value="Bacteria"/>
</dbReference>
<dbReference type="HOGENOM" id="CLU_094104_2_0_6"/>
<dbReference type="OrthoDB" id="5677577at2"/>
<dbReference type="Proteomes" id="UP000000230">
    <property type="component" value="Chromosome"/>
</dbReference>
<dbReference type="GO" id="GO:0005096">
    <property type="term" value="F:GTPase activator activity"/>
    <property type="evidence" value="ECO:0007669"/>
    <property type="project" value="UniProtKB-KW"/>
</dbReference>
<dbReference type="GO" id="GO:0042254">
    <property type="term" value="P:ribosome biogenesis"/>
    <property type="evidence" value="ECO:0007669"/>
    <property type="project" value="UniProtKB-KW"/>
</dbReference>
<dbReference type="HAMAP" id="MF_01058">
    <property type="entry name" value="GAP_YihI"/>
    <property type="match status" value="1"/>
</dbReference>
<dbReference type="InterPro" id="IPR007336">
    <property type="entry name" value="YihI"/>
</dbReference>
<dbReference type="NCBIfam" id="NF003560">
    <property type="entry name" value="PRK05244.1-1"/>
    <property type="match status" value="1"/>
</dbReference>
<dbReference type="Pfam" id="PF04220">
    <property type="entry name" value="YihI"/>
    <property type="match status" value="1"/>
</dbReference>
<accession>A4WGC4</accession>
<evidence type="ECO:0000255" key="1">
    <source>
        <dbReference type="HAMAP-Rule" id="MF_01058"/>
    </source>
</evidence>
<evidence type="ECO:0000256" key="2">
    <source>
        <dbReference type="SAM" id="MobiDB-lite"/>
    </source>
</evidence>
<sequence>MKKPTSAAGAKRPTKAHRKTREELNQEARDRKRVKKHSGHSAGSRANGSSASGSTAQNSKQKDPRIGSKTPIPLGVTDTPVVKQHKPKSEKPMLSPQAELDMLENDERLDALLERLEAGEKLNAEEQKWVDAKLDRIDELMQQLGLSYEDDEDDEEEEKQDDMMRLLKGGN</sequence>
<comment type="function">
    <text evidence="1">A GTPase-activating protein (GAP) that modifies Der/EngA GTPase function. May play a role in ribosome biogenesis.</text>
</comment>
<comment type="subunit">
    <text evidence="1">Interacts with Der.</text>
</comment>
<comment type="similarity">
    <text evidence="1">Belongs to the YihI family.</text>
</comment>
<reference key="1">
    <citation type="journal article" date="2010" name="PLoS Genet.">
        <title>Genome sequence of the plant growth promoting endophytic bacterium Enterobacter sp. 638.</title>
        <authorList>
            <person name="Taghavi S."/>
            <person name="van der Lelie D."/>
            <person name="Hoffman A."/>
            <person name="Zhang Y.B."/>
            <person name="Walla M.D."/>
            <person name="Vangronsveld J."/>
            <person name="Newman L."/>
            <person name="Monchy S."/>
        </authorList>
    </citation>
    <scope>NUCLEOTIDE SEQUENCE [LARGE SCALE GENOMIC DNA]</scope>
    <source>
        <strain>638</strain>
    </source>
</reference>
<protein>
    <recommendedName>
        <fullName evidence="1">Der GTPase-activating protein YihI</fullName>
    </recommendedName>
</protein>
<feature type="chain" id="PRO_1000064423" description="Der GTPase-activating protein YihI">
    <location>
        <begin position="1"/>
        <end position="171"/>
    </location>
</feature>
<feature type="region of interest" description="Disordered" evidence="2">
    <location>
        <begin position="1"/>
        <end position="99"/>
    </location>
</feature>
<feature type="region of interest" description="Disordered" evidence="2">
    <location>
        <begin position="145"/>
        <end position="171"/>
    </location>
</feature>
<feature type="compositionally biased region" description="Basic and acidic residues" evidence="2">
    <location>
        <begin position="20"/>
        <end position="30"/>
    </location>
</feature>
<feature type="compositionally biased region" description="Low complexity" evidence="2">
    <location>
        <begin position="40"/>
        <end position="59"/>
    </location>
</feature>
<feature type="compositionally biased region" description="Acidic residues" evidence="2">
    <location>
        <begin position="148"/>
        <end position="160"/>
    </location>
</feature>
<organism>
    <name type="scientific">Enterobacter sp. (strain 638)</name>
    <dbReference type="NCBI Taxonomy" id="399742"/>
    <lineage>
        <taxon>Bacteria</taxon>
        <taxon>Pseudomonadati</taxon>
        <taxon>Pseudomonadota</taxon>
        <taxon>Gammaproteobacteria</taxon>
        <taxon>Enterobacterales</taxon>
        <taxon>Enterobacteriaceae</taxon>
        <taxon>Enterobacter</taxon>
    </lineage>
</organism>
<gene>
    <name evidence="1" type="primary">yihI</name>
    <name type="ordered locus">Ent638_4100</name>
</gene>
<proteinExistence type="inferred from homology"/>
<keyword id="KW-0343">GTPase activation</keyword>
<keyword id="KW-0690">Ribosome biogenesis</keyword>